<accession>Q6LWY8</accession>
<organism>
    <name type="scientific">Methanococcus maripaludis (strain DSM 14266 / JCM 13030 / NBRC 101832 / S2 / LL)</name>
    <dbReference type="NCBI Taxonomy" id="267377"/>
    <lineage>
        <taxon>Archaea</taxon>
        <taxon>Methanobacteriati</taxon>
        <taxon>Methanobacteriota</taxon>
        <taxon>Methanomada group</taxon>
        <taxon>Methanococci</taxon>
        <taxon>Methanococcales</taxon>
        <taxon>Methanococcaceae</taxon>
        <taxon>Methanococcus</taxon>
    </lineage>
</organism>
<comment type="function">
    <text evidence="1">Part of a complex that catalyzes the formation of methyl-coenzyme M and tetrahydromethanopterin from coenzyme M and methyl-tetrahydromethanopterin. This is an energy-conserving, sodium-ion translocating step.</text>
</comment>
<comment type="catalytic activity">
    <reaction evidence="1">
        <text>5-methyl-5,6,7,8-tetrahydromethanopterin + coenzyme M + 2 Na(+)(in) = 5,6,7,8-tetrahydromethanopterin + methyl-coenzyme M + 2 Na(+)(out)</text>
        <dbReference type="Rhea" id="RHEA:53492"/>
        <dbReference type="ChEBI" id="CHEBI:29101"/>
        <dbReference type="ChEBI" id="CHEBI:58103"/>
        <dbReference type="ChEBI" id="CHEBI:58116"/>
        <dbReference type="ChEBI" id="CHEBI:58286"/>
        <dbReference type="ChEBI" id="CHEBI:58319"/>
        <dbReference type="EC" id="7.2.1.4"/>
    </reaction>
</comment>
<comment type="pathway">
    <text evidence="1">One-carbon metabolism; methanogenesis from CO(2); methyl-coenzyme M from 5,10-methylene-5,6,7,8-tetrahydromethanopterin: step 2/2.</text>
</comment>
<comment type="subunit">
    <text evidence="1">The complex is composed of 8 subunits; MtrA, MtrB, MtrC, MtrD, MtrE, MtrF, MtrG and MtrH.</text>
</comment>
<comment type="subcellular location">
    <subcellularLocation>
        <location evidence="1">Cell membrane</location>
        <topology evidence="1">Single-pass membrane protein</topology>
    </subcellularLocation>
</comment>
<comment type="similarity">
    <text evidence="1">Belongs to the MtrG family.</text>
</comment>
<dbReference type="EC" id="7.2.1.4" evidence="1"/>
<dbReference type="EMBL" id="BX950229">
    <property type="protein sequence ID" value="CAF31122.1"/>
    <property type="molecule type" value="Genomic_DNA"/>
</dbReference>
<dbReference type="RefSeq" id="WP_011171510.1">
    <property type="nucleotide sequence ID" value="NC_005791.1"/>
</dbReference>
<dbReference type="SMR" id="Q6LWY8"/>
<dbReference type="STRING" id="267377.MMP1566"/>
<dbReference type="EnsemblBacteria" id="CAF31122">
    <property type="protein sequence ID" value="CAF31122"/>
    <property type="gene ID" value="MMP1566"/>
</dbReference>
<dbReference type="GeneID" id="41280207"/>
<dbReference type="KEGG" id="mmp:MMP1566"/>
<dbReference type="PATRIC" id="fig|267377.15.peg.1604"/>
<dbReference type="eggNOG" id="arCOG03380">
    <property type="taxonomic scope" value="Archaea"/>
</dbReference>
<dbReference type="HOGENOM" id="CLU_191926_0_0_2"/>
<dbReference type="OrthoDB" id="147532at2157"/>
<dbReference type="UniPathway" id="UPA00640">
    <property type="reaction ID" value="UER00698"/>
</dbReference>
<dbReference type="Proteomes" id="UP000000590">
    <property type="component" value="Chromosome"/>
</dbReference>
<dbReference type="GO" id="GO:0005886">
    <property type="term" value="C:plasma membrane"/>
    <property type="evidence" value="ECO:0007669"/>
    <property type="project" value="UniProtKB-SubCell"/>
</dbReference>
<dbReference type="GO" id="GO:0030269">
    <property type="term" value="F:tetrahydromethanopterin S-methyltransferase activity"/>
    <property type="evidence" value="ECO:0007669"/>
    <property type="project" value="UniProtKB-UniRule"/>
</dbReference>
<dbReference type="GO" id="GO:0019386">
    <property type="term" value="P:methanogenesis, from carbon dioxide"/>
    <property type="evidence" value="ECO:0007669"/>
    <property type="project" value="UniProtKB-UniRule"/>
</dbReference>
<dbReference type="GO" id="GO:0032259">
    <property type="term" value="P:methylation"/>
    <property type="evidence" value="ECO:0007669"/>
    <property type="project" value="UniProtKB-KW"/>
</dbReference>
<dbReference type="GO" id="GO:0006730">
    <property type="term" value="P:one-carbon metabolic process"/>
    <property type="evidence" value="ECO:0007669"/>
    <property type="project" value="UniProtKB-UniRule"/>
</dbReference>
<dbReference type="HAMAP" id="MF_01500">
    <property type="entry name" value="MtrG"/>
    <property type="match status" value="1"/>
</dbReference>
<dbReference type="InterPro" id="IPR005866">
    <property type="entry name" value="THM_MeTrfase_su_G"/>
</dbReference>
<dbReference type="NCBIfam" id="TIGR01149">
    <property type="entry name" value="mtrG"/>
    <property type="match status" value="1"/>
</dbReference>
<dbReference type="Pfam" id="PF04210">
    <property type="entry name" value="MtrG"/>
    <property type="match status" value="1"/>
</dbReference>
<dbReference type="PIRSF" id="PIRSF006500">
    <property type="entry name" value="MtrG"/>
    <property type="match status" value="1"/>
</dbReference>
<protein>
    <recommendedName>
        <fullName evidence="1">Tetrahydromethanopterin S-methyltransferase subunit G</fullName>
        <ecNumber evidence="1">7.2.1.4</ecNumber>
    </recommendedName>
    <alternativeName>
        <fullName evidence="1">N5-methyltetrahydromethanopterin--coenzyme M methyltransferase subunit G</fullName>
    </alternativeName>
</protein>
<keyword id="KW-1003">Cell membrane</keyword>
<keyword id="KW-0472">Membrane</keyword>
<keyword id="KW-0484">Methanogenesis</keyword>
<keyword id="KW-0489">Methyltransferase</keyword>
<keyword id="KW-0554">One-carbon metabolism</keyword>
<keyword id="KW-1185">Reference proteome</keyword>
<keyword id="KW-0808">Transferase</keyword>
<keyword id="KW-1278">Translocase</keyword>
<keyword id="KW-0812">Transmembrane</keyword>
<keyword id="KW-1133">Transmembrane helix</keyword>
<name>MTRG_METMP</name>
<evidence type="ECO:0000255" key="1">
    <source>
        <dbReference type="HAMAP-Rule" id="MF_01500"/>
    </source>
</evidence>
<feature type="chain" id="PRO_0000147558" description="Tetrahydromethanopterin S-methyltransferase subunit G">
    <location>
        <begin position="1"/>
        <end position="74"/>
    </location>
</feature>
<feature type="transmembrane region" description="Helical" evidence="1">
    <location>
        <begin position="47"/>
        <end position="67"/>
    </location>
</feature>
<sequence length="74" mass="8198">MSEIPTVVTPTKDYKRLQAKLDEIENTVENTNAEIIQRTGKKAGRDVGIAYGLAIGFIFVYVLGTVLPLFDLIK</sequence>
<gene>
    <name evidence="1" type="primary">mtrG</name>
    <name type="ordered locus">MMP1566</name>
</gene>
<proteinExistence type="inferred from homology"/>
<reference key="1">
    <citation type="journal article" date="2004" name="J. Bacteriol.">
        <title>Complete genome sequence of the genetically tractable hydrogenotrophic methanogen Methanococcus maripaludis.</title>
        <authorList>
            <person name="Hendrickson E.L."/>
            <person name="Kaul R."/>
            <person name="Zhou Y."/>
            <person name="Bovee D."/>
            <person name="Chapman P."/>
            <person name="Chung J."/>
            <person name="Conway de Macario E."/>
            <person name="Dodsworth J.A."/>
            <person name="Gillett W."/>
            <person name="Graham D.E."/>
            <person name="Hackett M."/>
            <person name="Haydock A.K."/>
            <person name="Kang A."/>
            <person name="Land M.L."/>
            <person name="Levy R."/>
            <person name="Lie T.J."/>
            <person name="Major T.A."/>
            <person name="Moore B.C."/>
            <person name="Porat I."/>
            <person name="Palmeiri A."/>
            <person name="Rouse G."/>
            <person name="Saenphimmachak C."/>
            <person name="Soell D."/>
            <person name="Van Dien S."/>
            <person name="Wang T."/>
            <person name="Whitman W.B."/>
            <person name="Xia Q."/>
            <person name="Zhang Y."/>
            <person name="Larimer F.W."/>
            <person name="Olson M.V."/>
            <person name="Leigh J.A."/>
        </authorList>
    </citation>
    <scope>NUCLEOTIDE SEQUENCE [LARGE SCALE GENOMIC DNA]</scope>
    <source>
        <strain>DSM 14266 / JCM 13030 / NBRC 101832 / S2 / LL</strain>
    </source>
</reference>